<gene>
    <name evidence="1" type="primary">atpD</name>
    <name type="ordered locus">SAS2006</name>
</gene>
<sequence>MGIGRVTQVMGPVIDVRFEHNEVPKINNALVIDVPKEEGTIQLTLEVALQLGDDVVRTIAMDSTDGVQRGMDVKDTGKEISVPVGDETLGRVFNVLGETIDLKEEISDSVRRDPIHRQAPAFDELSTEVQILETGIKVVDLLAPYIKGGKIGLFGGAGVGKTVLIQELINNIAQEHGGISVFAGVGERTREGNDLYFEMSDSGVIKKTAMVFGQMNEPPGARMRVALSGLTMAEYFRDEQGQDVLLFIDNIFRFTQAGSEVSALLGRMPSAVGYQPTLATEMGQLQERITSTTKGSVTSIQAVFVPADDYTDPAPATAFAHLDATTNLERKLTEMGIYPAVDPLASTSRALEPSIVGQEHYEVARDVQSTLQKYRELQDIIAILGMDELSDEDKQTVERARRIQFFLSQNFHVAEQFTGQKGSYVPVKTTVANFKDILDGKYDHIPEDAFRLVGSMDDVIAKAKDMGVEV</sequence>
<feature type="chain" id="PRO_0000144472" description="ATP synthase subunit beta">
    <location>
        <begin position="1"/>
        <end position="470"/>
    </location>
</feature>
<feature type="binding site" evidence="1">
    <location>
        <begin position="155"/>
        <end position="162"/>
    </location>
    <ligand>
        <name>ATP</name>
        <dbReference type="ChEBI" id="CHEBI:30616"/>
    </ligand>
</feature>
<protein>
    <recommendedName>
        <fullName evidence="1">ATP synthase subunit beta</fullName>
        <ecNumber evidence="1">7.1.2.2</ecNumber>
    </recommendedName>
    <alternativeName>
        <fullName evidence="1">ATP synthase F1 sector subunit beta</fullName>
    </alternativeName>
    <alternativeName>
        <fullName evidence="1">F-ATPase subunit beta</fullName>
    </alternativeName>
</protein>
<dbReference type="EC" id="7.1.2.2" evidence="1"/>
<dbReference type="EMBL" id="BX571857">
    <property type="protein sequence ID" value="CAG43814.1"/>
    <property type="molecule type" value="Genomic_DNA"/>
</dbReference>
<dbReference type="RefSeq" id="WP_000511135.1">
    <property type="nucleotide sequence ID" value="NC_002953.3"/>
</dbReference>
<dbReference type="SMR" id="Q6G7K7"/>
<dbReference type="GeneID" id="98346410"/>
<dbReference type="KEGG" id="sas:SAS2006"/>
<dbReference type="HOGENOM" id="CLU_022398_0_2_9"/>
<dbReference type="GO" id="GO:0005886">
    <property type="term" value="C:plasma membrane"/>
    <property type="evidence" value="ECO:0007669"/>
    <property type="project" value="UniProtKB-SubCell"/>
</dbReference>
<dbReference type="GO" id="GO:0045259">
    <property type="term" value="C:proton-transporting ATP synthase complex"/>
    <property type="evidence" value="ECO:0007669"/>
    <property type="project" value="UniProtKB-KW"/>
</dbReference>
<dbReference type="GO" id="GO:0005524">
    <property type="term" value="F:ATP binding"/>
    <property type="evidence" value="ECO:0007669"/>
    <property type="project" value="UniProtKB-UniRule"/>
</dbReference>
<dbReference type="GO" id="GO:0016887">
    <property type="term" value="F:ATP hydrolysis activity"/>
    <property type="evidence" value="ECO:0007669"/>
    <property type="project" value="InterPro"/>
</dbReference>
<dbReference type="GO" id="GO:0046933">
    <property type="term" value="F:proton-transporting ATP synthase activity, rotational mechanism"/>
    <property type="evidence" value="ECO:0007669"/>
    <property type="project" value="UniProtKB-UniRule"/>
</dbReference>
<dbReference type="CDD" id="cd18110">
    <property type="entry name" value="ATP-synt_F1_beta_C"/>
    <property type="match status" value="1"/>
</dbReference>
<dbReference type="CDD" id="cd18115">
    <property type="entry name" value="ATP-synt_F1_beta_N"/>
    <property type="match status" value="1"/>
</dbReference>
<dbReference type="CDD" id="cd01133">
    <property type="entry name" value="F1-ATPase_beta_CD"/>
    <property type="match status" value="1"/>
</dbReference>
<dbReference type="FunFam" id="1.10.1140.10:FF:000001">
    <property type="entry name" value="ATP synthase subunit beta"/>
    <property type="match status" value="1"/>
</dbReference>
<dbReference type="FunFam" id="2.40.10.170:FF:000005">
    <property type="entry name" value="ATP synthase subunit beta"/>
    <property type="match status" value="1"/>
</dbReference>
<dbReference type="FunFam" id="3.40.50.300:FF:000004">
    <property type="entry name" value="ATP synthase subunit beta"/>
    <property type="match status" value="1"/>
</dbReference>
<dbReference type="Gene3D" id="2.40.10.170">
    <property type="match status" value="1"/>
</dbReference>
<dbReference type="Gene3D" id="1.10.1140.10">
    <property type="entry name" value="Bovine Mitochondrial F1-atpase, Atp Synthase Beta Chain, Chain D, domain 3"/>
    <property type="match status" value="1"/>
</dbReference>
<dbReference type="Gene3D" id="3.40.50.300">
    <property type="entry name" value="P-loop containing nucleotide triphosphate hydrolases"/>
    <property type="match status" value="1"/>
</dbReference>
<dbReference type="HAMAP" id="MF_01347">
    <property type="entry name" value="ATP_synth_beta_bact"/>
    <property type="match status" value="1"/>
</dbReference>
<dbReference type="InterPro" id="IPR003593">
    <property type="entry name" value="AAA+_ATPase"/>
</dbReference>
<dbReference type="InterPro" id="IPR055190">
    <property type="entry name" value="ATP-synt_VA_C"/>
</dbReference>
<dbReference type="InterPro" id="IPR005722">
    <property type="entry name" value="ATP_synth_F1_bsu"/>
</dbReference>
<dbReference type="InterPro" id="IPR020003">
    <property type="entry name" value="ATPase_a/bsu_AS"/>
</dbReference>
<dbReference type="InterPro" id="IPR050053">
    <property type="entry name" value="ATPase_alpha/beta_chains"/>
</dbReference>
<dbReference type="InterPro" id="IPR004100">
    <property type="entry name" value="ATPase_F1/V1/A1_a/bsu_N"/>
</dbReference>
<dbReference type="InterPro" id="IPR036121">
    <property type="entry name" value="ATPase_F1/V1/A1_a/bsu_N_sf"/>
</dbReference>
<dbReference type="InterPro" id="IPR000194">
    <property type="entry name" value="ATPase_F1/V1/A1_a/bsu_nucl-bd"/>
</dbReference>
<dbReference type="InterPro" id="IPR024034">
    <property type="entry name" value="ATPase_F1/V1_b/a_C"/>
</dbReference>
<dbReference type="InterPro" id="IPR027417">
    <property type="entry name" value="P-loop_NTPase"/>
</dbReference>
<dbReference type="NCBIfam" id="TIGR01039">
    <property type="entry name" value="atpD"/>
    <property type="match status" value="1"/>
</dbReference>
<dbReference type="PANTHER" id="PTHR15184">
    <property type="entry name" value="ATP SYNTHASE"/>
    <property type="match status" value="1"/>
</dbReference>
<dbReference type="PANTHER" id="PTHR15184:SF71">
    <property type="entry name" value="ATP SYNTHASE SUBUNIT BETA, MITOCHONDRIAL"/>
    <property type="match status" value="1"/>
</dbReference>
<dbReference type="Pfam" id="PF00006">
    <property type="entry name" value="ATP-synt_ab"/>
    <property type="match status" value="1"/>
</dbReference>
<dbReference type="Pfam" id="PF02874">
    <property type="entry name" value="ATP-synt_ab_N"/>
    <property type="match status" value="1"/>
</dbReference>
<dbReference type="Pfam" id="PF22919">
    <property type="entry name" value="ATP-synt_VA_C"/>
    <property type="match status" value="1"/>
</dbReference>
<dbReference type="SMART" id="SM00382">
    <property type="entry name" value="AAA"/>
    <property type="match status" value="1"/>
</dbReference>
<dbReference type="SUPFAM" id="SSF47917">
    <property type="entry name" value="C-terminal domain of alpha and beta subunits of F1 ATP synthase"/>
    <property type="match status" value="1"/>
</dbReference>
<dbReference type="SUPFAM" id="SSF50615">
    <property type="entry name" value="N-terminal domain of alpha and beta subunits of F1 ATP synthase"/>
    <property type="match status" value="1"/>
</dbReference>
<dbReference type="SUPFAM" id="SSF52540">
    <property type="entry name" value="P-loop containing nucleoside triphosphate hydrolases"/>
    <property type="match status" value="1"/>
</dbReference>
<dbReference type="PROSITE" id="PS00152">
    <property type="entry name" value="ATPASE_ALPHA_BETA"/>
    <property type="match status" value="1"/>
</dbReference>
<comment type="function">
    <text evidence="1">Produces ATP from ADP in the presence of a proton gradient across the membrane. The catalytic sites are hosted primarily by the beta subunits.</text>
</comment>
<comment type="catalytic activity">
    <reaction evidence="1">
        <text>ATP + H2O + 4 H(+)(in) = ADP + phosphate + 5 H(+)(out)</text>
        <dbReference type="Rhea" id="RHEA:57720"/>
        <dbReference type="ChEBI" id="CHEBI:15377"/>
        <dbReference type="ChEBI" id="CHEBI:15378"/>
        <dbReference type="ChEBI" id="CHEBI:30616"/>
        <dbReference type="ChEBI" id="CHEBI:43474"/>
        <dbReference type="ChEBI" id="CHEBI:456216"/>
        <dbReference type="EC" id="7.1.2.2"/>
    </reaction>
</comment>
<comment type="subunit">
    <text evidence="1">F-type ATPases have 2 components, CF(1) - the catalytic core - and CF(0) - the membrane proton channel. CF(1) has five subunits: alpha(3), beta(3), gamma(1), delta(1), epsilon(1). CF(0) has three main subunits: a(1), b(2) and c(9-12). The alpha and beta chains form an alternating ring which encloses part of the gamma chain. CF(1) is attached to CF(0) by a central stalk formed by the gamma and epsilon chains, while a peripheral stalk is formed by the delta and b chains.</text>
</comment>
<comment type="subcellular location">
    <subcellularLocation>
        <location evidence="1">Cell membrane</location>
        <topology evidence="1">Peripheral membrane protein</topology>
    </subcellularLocation>
</comment>
<comment type="similarity">
    <text evidence="1">Belongs to the ATPase alpha/beta chains family.</text>
</comment>
<proteinExistence type="inferred from homology"/>
<organism>
    <name type="scientific">Staphylococcus aureus (strain MSSA476)</name>
    <dbReference type="NCBI Taxonomy" id="282459"/>
    <lineage>
        <taxon>Bacteria</taxon>
        <taxon>Bacillati</taxon>
        <taxon>Bacillota</taxon>
        <taxon>Bacilli</taxon>
        <taxon>Bacillales</taxon>
        <taxon>Staphylococcaceae</taxon>
        <taxon>Staphylococcus</taxon>
    </lineage>
</organism>
<reference key="1">
    <citation type="journal article" date="2004" name="Proc. Natl. Acad. Sci. U.S.A.">
        <title>Complete genomes of two clinical Staphylococcus aureus strains: evidence for the rapid evolution of virulence and drug resistance.</title>
        <authorList>
            <person name="Holden M.T.G."/>
            <person name="Feil E.J."/>
            <person name="Lindsay J.A."/>
            <person name="Peacock S.J."/>
            <person name="Day N.P.J."/>
            <person name="Enright M.C."/>
            <person name="Foster T.J."/>
            <person name="Moore C.E."/>
            <person name="Hurst L."/>
            <person name="Atkin R."/>
            <person name="Barron A."/>
            <person name="Bason N."/>
            <person name="Bentley S.D."/>
            <person name="Chillingworth C."/>
            <person name="Chillingworth T."/>
            <person name="Churcher C."/>
            <person name="Clark L."/>
            <person name="Corton C."/>
            <person name="Cronin A."/>
            <person name="Doggett J."/>
            <person name="Dowd L."/>
            <person name="Feltwell T."/>
            <person name="Hance Z."/>
            <person name="Harris B."/>
            <person name="Hauser H."/>
            <person name="Holroyd S."/>
            <person name="Jagels K."/>
            <person name="James K.D."/>
            <person name="Lennard N."/>
            <person name="Line A."/>
            <person name="Mayes R."/>
            <person name="Moule S."/>
            <person name="Mungall K."/>
            <person name="Ormond D."/>
            <person name="Quail M.A."/>
            <person name="Rabbinowitsch E."/>
            <person name="Rutherford K.M."/>
            <person name="Sanders M."/>
            <person name="Sharp S."/>
            <person name="Simmonds M."/>
            <person name="Stevens K."/>
            <person name="Whitehead S."/>
            <person name="Barrell B.G."/>
            <person name="Spratt B.G."/>
            <person name="Parkhill J."/>
        </authorList>
    </citation>
    <scope>NUCLEOTIDE SEQUENCE [LARGE SCALE GENOMIC DNA]</scope>
    <source>
        <strain>MSSA476</strain>
    </source>
</reference>
<name>ATPB_STAAS</name>
<accession>Q6G7K7</accession>
<evidence type="ECO:0000255" key="1">
    <source>
        <dbReference type="HAMAP-Rule" id="MF_01347"/>
    </source>
</evidence>
<keyword id="KW-0066">ATP synthesis</keyword>
<keyword id="KW-0067">ATP-binding</keyword>
<keyword id="KW-1003">Cell membrane</keyword>
<keyword id="KW-0139">CF(1)</keyword>
<keyword id="KW-0375">Hydrogen ion transport</keyword>
<keyword id="KW-0406">Ion transport</keyword>
<keyword id="KW-0472">Membrane</keyword>
<keyword id="KW-0547">Nucleotide-binding</keyword>
<keyword id="KW-1278">Translocase</keyword>
<keyword id="KW-0813">Transport</keyword>